<organism>
    <name type="scientific">Antirrhinum majus</name>
    <name type="common">Garden snapdragon</name>
    <dbReference type="NCBI Taxonomy" id="4151"/>
    <lineage>
        <taxon>Eukaryota</taxon>
        <taxon>Viridiplantae</taxon>
        <taxon>Streptophyta</taxon>
        <taxon>Embryophyta</taxon>
        <taxon>Tracheophyta</taxon>
        <taxon>Spermatophyta</taxon>
        <taxon>Magnoliopsida</taxon>
        <taxon>eudicotyledons</taxon>
        <taxon>Gunneridae</taxon>
        <taxon>Pentapetalae</taxon>
        <taxon>asterids</taxon>
        <taxon>lamiids</taxon>
        <taxon>Lamiales</taxon>
        <taxon>Plantaginaceae</taxon>
        <taxon>Antirrhineae</taxon>
        <taxon>Antirrhinum</taxon>
    </lineage>
</organism>
<sequence length="171" mass="19466">MDPNMQNMMSSYLKIKKLVGDEGSDFEEEEEGEDEEEEEQERVVKVNFAESQLKKKKLNLGEGSGGKSGEKHTASGGGVVAQPCCLVENCGADLRNCKKYYQRHRVCEVHAKAPVVSVEGLMQRFCQQCSRFHDLSEFDQTKRSCRRRLAGHNERRRKSSLESHKEGRSPR</sequence>
<accession>Q38740</accession>
<feature type="chain" id="PRO_0000132721" description="Squamosa promoter-binding protein 2">
    <location>
        <begin position="1"/>
        <end position="171"/>
    </location>
</feature>
<feature type="zinc finger region" description="SBP-type" evidence="3">
    <location>
        <begin position="82"/>
        <end position="159"/>
    </location>
</feature>
<feature type="region of interest" description="Disordered" evidence="4">
    <location>
        <begin position="20"/>
        <end position="46"/>
    </location>
</feature>
<feature type="region of interest" description="Disordered" evidence="4">
    <location>
        <begin position="57"/>
        <end position="76"/>
    </location>
</feature>
<feature type="region of interest" description="Disordered" evidence="4">
    <location>
        <begin position="149"/>
        <end position="171"/>
    </location>
</feature>
<feature type="short sequence motif" description="Bipartite nuclear localization signal" evidence="2">
    <location>
        <begin position="142"/>
        <end position="158"/>
    </location>
</feature>
<feature type="compositionally biased region" description="Acidic residues" evidence="4">
    <location>
        <begin position="22"/>
        <end position="40"/>
    </location>
</feature>
<feature type="compositionally biased region" description="Basic residues" evidence="4">
    <location>
        <begin position="149"/>
        <end position="158"/>
    </location>
</feature>
<feature type="compositionally biased region" description="Basic and acidic residues" evidence="4">
    <location>
        <begin position="159"/>
        <end position="171"/>
    </location>
</feature>
<feature type="binding site" evidence="3">
    <location>
        <position position="85"/>
    </location>
    <ligand>
        <name>Zn(2+)</name>
        <dbReference type="ChEBI" id="CHEBI:29105"/>
        <label>1</label>
    </ligand>
</feature>
<feature type="binding site" evidence="3">
    <location>
        <position position="90"/>
    </location>
    <ligand>
        <name>Zn(2+)</name>
        <dbReference type="ChEBI" id="CHEBI:29105"/>
        <label>1</label>
    </ligand>
</feature>
<feature type="binding site" evidence="3">
    <location>
        <position position="107"/>
    </location>
    <ligand>
        <name>Zn(2+)</name>
        <dbReference type="ChEBI" id="CHEBI:29105"/>
        <label>1</label>
    </ligand>
</feature>
<feature type="binding site" evidence="3">
    <location>
        <position position="110"/>
    </location>
    <ligand>
        <name>Zn(2+)</name>
        <dbReference type="ChEBI" id="CHEBI:29105"/>
        <label>1</label>
    </ligand>
</feature>
<feature type="binding site" evidence="3">
    <location>
        <position position="126"/>
    </location>
    <ligand>
        <name>Zn(2+)</name>
        <dbReference type="ChEBI" id="CHEBI:29105"/>
        <label>2</label>
    </ligand>
</feature>
<feature type="binding site" evidence="3">
    <location>
        <position position="129"/>
    </location>
    <ligand>
        <name>Zn(2+)</name>
        <dbReference type="ChEBI" id="CHEBI:29105"/>
        <label>2</label>
    </ligand>
</feature>
<feature type="binding site" evidence="3">
    <location>
        <position position="133"/>
    </location>
    <ligand>
        <name>Zn(2+)</name>
        <dbReference type="ChEBI" id="CHEBI:29105"/>
        <label>2</label>
    </ligand>
</feature>
<feature type="binding site" evidence="3">
    <location>
        <position position="145"/>
    </location>
    <ligand>
        <name>Zn(2+)</name>
        <dbReference type="ChEBI" id="CHEBI:29105"/>
        <label>2</label>
    </ligand>
</feature>
<keyword id="KW-0238">DNA-binding</keyword>
<keyword id="KW-0479">Metal-binding</keyword>
<keyword id="KW-0539">Nucleus</keyword>
<keyword id="KW-0804">Transcription</keyword>
<keyword id="KW-0805">Transcription regulation</keyword>
<keyword id="KW-0862">Zinc</keyword>
<keyword id="KW-0863">Zinc-finger</keyword>
<proteinExistence type="evidence at transcript level"/>
<name>SBP2_ANTMA</name>
<dbReference type="EMBL" id="X92079">
    <property type="protein sequence ID" value="CAA63061.1"/>
    <property type="molecule type" value="mRNA"/>
</dbReference>
<dbReference type="PIR" id="S62361">
    <property type="entry name" value="S62361"/>
</dbReference>
<dbReference type="SMR" id="Q38740"/>
<dbReference type="GO" id="GO:0005634">
    <property type="term" value="C:nucleus"/>
    <property type="evidence" value="ECO:0007669"/>
    <property type="project" value="UniProtKB-SubCell"/>
</dbReference>
<dbReference type="GO" id="GO:0003677">
    <property type="term" value="F:DNA binding"/>
    <property type="evidence" value="ECO:0007669"/>
    <property type="project" value="UniProtKB-KW"/>
</dbReference>
<dbReference type="GO" id="GO:0003700">
    <property type="term" value="F:DNA-binding transcription factor activity"/>
    <property type="evidence" value="ECO:0007669"/>
    <property type="project" value="InterPro"/>
</dbReference>
<dbReference type="GO" id="GO:0008270">
    <property type="term" value="F:zinc ion binding"/>
    <property type="evidence" value="ECO:0007669"/>
    <property type="project" value="UniProtKB-KW"/>
</dbReference>
<dbReference type="GO" id="GO:0009908">
    <property type="term" value="P:flower development"/>
    <property type="evidence" value="ECO:0007669"/>
    <property type="project" value="InterPro"/>
</dbReference>
<dbReference type="FunFam" id="4.10.1100.10:FF:000001">
    <property type="entry name" value="Squamosa promoter-binding-like protein 14"/>
    <property type="match status" value="1"/>
</dbReference>
<dbReference type="Gene3D" id="4.10.1100.10">
    <property type="entry name" value="Transcription factor, SBP-box domain"/>
    <property type="match status" value="1"/>
</dbReference>
<dbReference type="InterPro" id="IPR044817">
    <property type="entry name" value="SBP-like"/>
</dbReference>
<dbReference type="InterPro" id="IPR004333">
    <property type="entry name" value="SBP_dom"/>
</dbReference>
<dbReference type="InterPro" id="IPR017238">
    <property type="entry name" value="SBP_fam"/>
</dbReference>
<dbReference type="InterPro" id="IPR036893">
    <property type="entry name" value="SBP_sf"/>
</dbReference>
<dbReference type="PANTHER" id="PTHR31251">
    <property type="entry name" value="SQUAMOSA PROMOTER-BINDING-LIKE PROTEIN 4"/>
    <property type="match status" value="1"/>
</dbReference>
<dbReference type="PANTHER" id="PTHR31251:SF226">
    <property type="entry name" value="SQUAMOSA PROMOTER-BINDING-LIKE PROTEIN 6"/>
    <property type="match status" value="1"/>
</dbReference>
<dbReference type="Pfam" id="PF03110">
    <property type="entry name" value="SBP"/>
    <property type="match status" value="1"/>
</dbReference>
<dbReference type="PIRSF" id="PIRSF037575">
    <property type="entry name" value="SBP"/>
    <property type="match status" value="1"/>
</dbReference>
<dbReference type="SUPFAM" id="SSF103612">
    <property type="entry name" value="SBT domain"/>
    <property type="match status" value="1"/>
</dbReference>
<dbReference type="PROSITE" id="PS51141">
    <property type="entry name" value="ZF_SBP"/>
    <property type="match status" value="1"/>
</dbReference>
<comment type="function">
    <text>Probable transcriptional factor. Binds to the promoter of the SQUAMOSA gene.</text>
</comment>
<comment type="subcellular location">
    <subcellularLocation>
        <location>Nucleus</location>
    </subcellularLocation>
</comment>
<comment type="domain">
    <text evidence="1">The SBP-type zinc finger is required for the binding to DNA.</text>
</comment>
<protein>
    <recommendedName>
        <fullName>Squamosa promoter-binding protein 2</fullName>
    </recommendedName>
</protein>
<gene>
    <name type="primary">SBP2</name>
</gene>
<evidence type="ECO:0000250" key="1"/>
<evidence type="ECO:0000255" key="2"/>
<evidence type="ECO:0000255" key="3">
    <source>
        <dbReference type="PROSITE-ProRule" id="PRU00470"/>
    </source>
</evidence>
<evidence type="ECO:0000256" key="4">
    <source>
        <dbReference type="SAM" id="MobiDB-lite"/>
    </source>
</evidence>
<reference key="1">
    <citation type="journal article" date="1996" name="Mol. Gen. Genet.">
        <title>A new family of DNA binding proteins includes putative transcriptional regulators of the Antirrhinum majus floral meristem identity gene SQUAMOSA.</title>
        <authorList>
            <person name="Klein J."/>
            <person name="Saedler H."/>
            <person name="Huijser P."/>
        </authorList>
    </citation>
    <scope>NUCLEOTIDE SEQUENCE [MRNA]</scope>
    <source>
        <strain>cv. Snowman</strain>
    </source>
</reference>